<organism>
    <name type="scientific">Pseudomonas fluorescens (strain Pf0-1)</name>
    <dbReference type="NCBI Taxonomy" id="205922"/>
    <lineage>
        <taxon>Bacteria</taxon>
        <taxon>Pseudomonadati</taxon>
        <taxon>Pseudomonadota</taxon>
        <taxon>Gammaproteobacteria</taxon>
        <taxon>Pseudomonadales</taxon>
        <taxon>Pseudomonadaceae</taxon>
        <taxon>Pseudomonas</taxon>
    </lineage>
</organism>
<accession>Q3KFI9</accession>
<reference key="1">
    <citation type="journal article" date="2009" name="Genome Biol.">
        <title>Genomic and genetic analyses of diversity and plant interactions of Pseudomonas fluorescens.</title>
        <authorList>
            <person name="Silby M.W."/>
            <person name="Cerdeno-Tarraga A.M."/>
            <person name="Vernikos G.S."/>
            <person name="Giddens S.R."/>
            <person name="Jackson R.W."/>
            <person name="Preston G.M."/>
            <person name="Zhang X.-X."/>
            <person name="Moon C.D."/>
            <person name="Gehrig S.M."/>
            <person name="Godfrey S.A.C."/>
            <person name="Knight C.G."/>
            <person name="Malone J.G."/>
            <person name="Robinson Z."/>
            <person name="Spiers A.J."/>
            <person name="Harris S."/>
            <person name="Challis G.L."/>
            <person name="Yaxley A.M."/>
            <person name="Harris D."/>
            <person name="Seeger K."/>
            <person name="Murphy L."/>
            <person name="Rutter S."/>
            <person name="Squares R."/>
            <person name="Quail M.A."/>
            <person name="Saunders E."/>
            <person name="Mavromatis K."/>
            <person name="Brettin T.S."/>
            <person name="Bentley S.D."/>
            <person name="Hothersall J."/>
            <person name="Stephens E."/>
            <person name="Thomas C.M."/>
            <person name="Parkhill J."/>
            <person name="Levy S.B."/>
            <person name="Rainey P.B."/>
            <person name="Thomson N.R."/>
        </authorList>
    </citation>
    <scope>NUCLEOTIDE SEQUENCE [LARGE SCALE GENOMIC DNA]</scope>
    <source>
        <strain>Pf0-1</strain>
    </source>
</reference>
<feature type="chain" id="PRO_0000357100" description="Methylthioribulose-1-phosphate dehydratase">
    <location>
        <begin position="1"/>
        <end position="208"/>
    </location>
</feature>
<feature type="binding site" evidence="1">
    <location>
        <position position="96"/>
    </location>
    <ligand>
        <name>Zn(2+)</name>
        <dbReference type="ChEBI" id="CHEBI:29105"/>
    </ligand>
</feature>
<feature type="binding site" evidence="1">
    <location>
        <position position="98"/>
    </location>
    <ligand>
        <name>Zn(2+)</name>
        <dbReference type="ChEBI" id="CHEBI:29105"/>
    </ligand>
</feature>
<sequence length="208" mass="23235">MSLTREQLAQQIVDAGRFLYGRGWSPATSSNYSTRLSPSEALLTVSGKHKGQLGLDDVLATDLSGNSLEPGKKPSAETLLHTQLYSWRPEIGAVLHTHSVNATVLSRLTPQDFIEFEDYELQKAFSGVSTHESRVRVPIFDNDQDIARLAAKVQPWLEAHPDCVGYLIRGHGLYTWGAQMSDALRQIEAFEFLFECELKTRSVMNRQG</sequence>
<protein>
    <recommendedName>
        <fullName evidence="1">Methylthioribulose-1-phosphate dehydratase</fullName>
        <shortName evidence="1">MTRu-1-P dehydratase</shortName>
        <ecNumber evidence="1">4.2.1.109</ecNumber>
    </recommendedName>
</protein>
<dbReference type="EC" id="4.2.1.109" evidence="1"/>
<dbReference type="EMBL" id="CP000094">
    <property type="protein sequence ID" value="ABA73467.1"/>
    <property type="molecule type" value="Genomic_DNA"/>
</dbReference>
<dbReference type="RefSeq" id="WP_011333209.1">
    <property type="nucleotide sequence ID" value="NC_007492.2"/>
</dbReference>
<dbReference type="SMR" id="Q3KFI9"/>
<dbReference type="KEGG" id="pfo:Pfl01_1724"/>
<dbReference type="eggNOG" id="COG0235">
    <property type="taxonomic scope" value="Bacteria"/>
</dbReference>
<dbReference type="HOGENOM" id="CLU_006033_4_1_6"/>
<dbReference type="UniPathway" id="UPA00904">
    <property type="reaction ID" value="UER00875"/>
</dbReference>
<dbReference type="Proteomes" id="UP000002704">
    <property type="component" value="Chromosome"/>
</dbReference>
<dbReference type="GO" id="GO:0005737">
    <property type="term" value="C:cytoplasm"/>
    <property type="evidence" value="ECO:0007669"/>
    <property type="project" value="InterPro"/>
</dbReference>
<dbReference type="GO" id="GO:0046570">
    <property type="term" value="F:methylthioribulose 1-phosphate dehydratase activity"/>
    <property type="evidence" value="ECO:0007669"/>
    <property type="project" value="UniProtKB-UniRule"/>
</dbReference>
<dbReference type="GO" id="GO:0008270">
    <property type="term" value="F:zinc ion binding"/>
    <property type="evidence" value="ECO:0007669"/>
    <property type="project" value="UniProtKB-UniRule"/>
</dbReference>
<dbReference type="GO" id="GO:0019509">
    <property type="term" value="P:L-methionine salvage from methylthioadenosine"/>
    <property type="evidence" value="ECO:0007669"/>
    <property type="project" value="UniProtKB-UniRule"/>
</dbReference>
<dbReference type="GO" id="GO:0005996">
    <property type="term" value="P:monosaccharide metabolic process"/>
    <property type="evidence" value="ECO:0007669"/>
    <property type="project" value="UniProtKB-ARBA"/>
</dbReference>
<dbReference type="Gene3D" id="3.40.225.10">
    <property type="entry name" value="Class II aldolase/adducin N-terminal domain"/>
    <property type="match status" value="1"/>
</dbReference>
<dbReference type="HAMAP" id="MF_01677">
    <property type="entry name" value="Salvage_MtnB"/>
    <property type="match status" value="1"/>
</dbReference>
<dbReference type="InterPro" id="IPR001303">
    <property type="entry name" value="Aldolase_II/adducin_N"/>
</dbReference>
<dbReference type="InterPro" id="IPR036409">
    <property type="entry name" value="Aldolase_II/adducin_N_sf"/>
</dbReference>
<dbReference type="InterPro" id="IPR017714">
    <property type="entry name" value="MethylthioRu-1-P_deHdtase_MtnB"/>
</dbReference>
<dbReference type="NCBIfam" id="NF006672">
    <property type="entry name" value="PRK09220.1"/>
    <property type="match status" value="1"/>
</dbReference>
<dbReference type="NCBIfam" id="TIGR03328">
    <property type="entry name" value="salvage_mtnB"/>
    <property type="match status" value="1"/>
</dbReference>
<dbReference type="PANTHER" id="PTHR10640">
    <property type="entry name" value="METHYLTHIORIBULOSE-1-PHOSPHATE DEHYDRATASE"/>
    <property type="match status" value="1"/>
</dbReference>
<dbReference type="PANTHER" id="PTHR10640:SF7">
    <property type="entry name" value="METHYLTHIORIBULOSE-1-PHOSPHATE DEHYDRATASE"/>
    <property type="match status" value="1"/>
</dbReference>
<dbReference type="Pfam" id="PF00596">
    <property type="entry name" value="Aldolase_II"/>
    <property type="match status" value="1"/>
</dbReference>
<dbReference type="SMART" id="SM01007">
    <property type="entry name" value="Aldolase_II"/>
    <property type="match status" value="1"/>
</dbReference>
<dbReference type="SUPFAM" id="SSF53639">
    <property type="entry name" value="AraD/HMP-PK domain-like"/>
    <property type="match status" value="1"/>
</dbReference>
<proteinExistence type="inferred from homology"/>
<name>MTNB_PSEPF</name>
<comment type="function">
    <text evidence="1">Catalyzes the dehydration of methylthioribulose-1-phosphate (MTRu-1-P) into 2,3-diketo-5-methylthiopentyl-1-phosphate (DK-MTP-1-P).</text>
</comment>
<comment type="catalytic activity">
    <reaction evidence="1">
        <text>5-(methylsulfanyl)-D-ribulose 1-phosphate = 5-methylsulfanyl-2,3-dioxopentyl phosphate + H2O</text>
        <dbReference type="Rhea" id="RHEA:15549"/>
        <dbReference type="ChEBI" id="CHEBI:15377"/>
        <dbReference type="ChEBI" id="CHEBI:58548"/>
        <dbReference type="ChEBI" id="CHEBI:58828"/>
        <dbReference type="EC" id="4.2.1.109"/>
    </reaction>
</comment>
<comment type="cofactor">
    <cofactor evidence="1">
        <name>Zn(2+)</name>
        <dbReference type="ChEBI" id="CHEBI:29105"/>
    </cofactor>
    <text evidence="1">Binds 1 zinc ion per subunit.</text>
</comment>
<comment type="pathway">
    <text evidence="1">Amino-acid biosynthesis; L-methionine biosynthesis via salvage pathway; L-methionine from S-methyl-5-thio-alpha-D-ribose 1-phosphate: step 2/6.</text>
</comment>
<comment type="similarity">
    <text evidence="1">Belongs to the aldolase class II family. MtnB subfamily.</text>
</comment>
<keyword id="KW-0028">Amino-acid biosynthesis</keyword>
<keyword id="KW-0456">Lyase</keyword>
<keyword id="KW-0479">Metal-binding</keyword>
<keyword id="KW-0486">Methionine biosynthesis</keyword>
<keyword id="KW-0862">Zinc</keyword>
<gene>
    <name evidence="1" type="primary">mtnB</name>
    <name type="ordered locus">Pfl01_1724</name>
</gene>
<evidence type="ECO:0000255" key="1">
    <source>
        <dbReference type="HAMAP-Rule" id="MF_01677"/>
    </source>
</evidence>